<dbReference type="EC" id="6.1.1.5" evidence="1"/>
<dbReference type="EMBL" id="CP001157">
    <property type="protein sequence ID" value="ACO77407.1"/>
    <property type="molecule type" value="Genomic_DNA"/>
</dbReference>
<dbReference type="RefSeq" id="WP_012699827.1">
    <property type="nucleotide sequence ID" value="NC_012560.1"/>
</dbReference>
<dbReference type="SMR" id="C1DPH5"/>
<dbReference type="STRING" id="322710.Avin_11780"/>
<dbReference type="EnsemblBacteria" id="ACO77407">
    <property type="protein sequence ID" value="ACO77407"/>
    <property type="gene ID" value="Avin_11780"/>
</dbReference>
<dbReference type="GeneID" id="88184503"/>
<dbReference type="KEGG" id="avn:Avin_11780"/>
<dbReference type="eggNOG" id="COG0060">
    <property type="taxonomic scope" value="Bacteria"/>
</dbReference>
<dbReference type="HOGENOM" id="CLU_001493_7_1_6"/>
<dbReference type="OrthoDB" id="9810365at2"/>
<dbReference type="Proteomes" id="UP000002424">
    <property type="component" value="Chromosome"/>
</dbReference>
<dbReference type="GO" id="GO:0005829">
    <property type="term" value="C:cytosol"/>
    <property type="evidence" value="ECO:0007669"/>
    <property type="project" value="TreeGrafter"/>
</dbReference>
<dbReference type="GO" id="GO:0002161">
    <property type="term" value="F:aminoacyl-tRNA deacylase activity"/>
    <property type="evidence" value="ECO:0007669"/>
    <property type="project" value="InterPro"/>
</dbReference>
<dbReference type="GO" id="GO:0005524">
    <property type="term" value="F:ATP binding"/>
    <property type="evidence" value="ECO:0007669"/>
    <property type="project" value="UniProtKB-UniRule"/>
</dbReference>
<dbReference type="GO" id="GO:0004822">
    <property type="term" value="F:isoleucine-tRNA ligase activity"/>
    <property type="evidence" value="ECO:0007669"/>
    <property type="project" value="UniProtKB-UniRule"/>
</dbReference>
<dbReference type="GO" id="GO:0000049">
    <property type="term" value="F:tRNA binding"/>
    <property type="evidence" value="ECO:0007669"/>
    <property type="project" value="InterPro"/>
</dbReference>
<dbReference type="GO" id="GO:0008270">
    <property type="term" value="F:zinc ion binding"/>
    <property type="evidence" value="ECO:0007669"/>
    <property type="project" value="UniProtKB-UniRule"/>
</dbReference>
<dbReference type="GO" id="GO:0006428">
    <property type="term" value="P:isoleucyl-tRNA aminoacylation"/>
    <property type="evidence" value="ECO:0007669"/>
    <property type="project" value="UniProtKB-UniRule"/>
</dbReference>
<dbReference type="CDD" id="cd07960">
    <property type="entry name" value="Anticodon_Ia_Ile_BEm"/>
    <property type="match status" value="1"/>
</dbReference>
<dbReference type="CDD" id="cd00818">
    <property type="entry name" value="IleRS_core"/>
    <property type="match status" value="1"/>
</dbReference>
<dbReference type="FunFam" id="1.10.730.20:FF:000001">
    <property type="entry name" value="Isoleucine--tRNA ligase"/>
    <property type="match status" value="1"/>
</dbReference>
<dbReference type="FunFam" id="3.40.50.620:FF:000042">
    <property type="entry name" value="Isoleucine--tRNA ligase"/>
    <property type="match status" value="1"/>
</dbReference>
<dbReference type="FunFam" id="3.40.50.620:FF:000048">
    <property type="entry name" value="Isoleucine--tRNA ligase"/>
    <property type="match status" value="1"/>
</dbReference>
<dbReference type="Gene3D" id="1.10.730.20">
    <property type="match status" value="1"/>
</dbReference>
<dbReference type="Gene3D" id="3.40.50.620">
    <property type="entry name" value="HUPs"/>
    <property type="match status" value="2"/>
</dbReference>
<dbReference type="Gene3D" id="3.90.740.10">
    <property type="entry name" value="Valyl/Leucyl/Isoleucyl-tRNA synthetase, editing domain"/>
    <property type="match status" value="1"/>
</dbReference>
<dbReference type="HAMAP" id="MF_02002">
    <property type="entry name" value="Ile_tRNA_synth_type1"/>
    <property type="match status" value="1"/>
</dbReference>
<dbReference type="InterPro" id="IPR001412">
    <property type="entry name" value="aa-tRNA-synth_I_CS"/>
</dbReference>
<dbReference type="InterPro" id="IPR002300">
    <property type="entry name" value="aa-tRNA-synth_Ia"/>
</dbReference>
<dbReference type="InterPro" id="IPR033708">
    <property type="entry name" value="Anticodon_Ile_BEm"/>
</dbReference>
<dbReference type="InterPro" id="IPR002301">
    <property type="entry name" value="Ile-tRNA-ligase"/>
</dbReference>
<dbReference type="InterPro" id="IPR023585">
    <property type="entry name" value="Ile-tRNA-ligase_type1"/>
</dbReference>
<dbReference type="InterPro" id="IPR050081">
    <property type="entry name" value="Ile-tRNA_ligase"/>
</dbReference>
<dbReference type="InterPro" id="IPR013155">
    <property type="entry name" value="M/V/L/I-tRNA-synth_anticd-bd"/>
</dbReference>
<dbReference type="InterPro" id="IPR014729">
    <property type="entry name" value="Rossmann-like_a/b/a_fold"/>
</dbReference>
<dbReference type="InterPro" id="IPR009080">
    <property type="entry name" value="tRNAsynth_Ia_anticodon-bd"/>
</dbReference>
<dbReference type="InterPro" id="IPR009008">
    <property type="entry name" value="Val/Leu/Ile-tRNA-synth_edit"/>
</dbReference>
<dbReference type="InterPro" id="IPR010663">
    <property type="entry name" value="Znf_FPG/IleRS"/>
</dbReference>
<dbReference type="NCBIfam" id="TIGR00392">
    <property type="entry name" value="ileS"/>
    <property type="match status" value="1"/>
</dbReference>
<dbReference type="PANTHER" id="PTHR42765:SF1">
    <property type="entry name" value="ISOLEUCINE--TRNA LIGASE, MITOCHONDRIAL"/>
    <property type="match status" value="1"/>
</dbReference>
<dbReference type="PANTHER" id="PTHR42765">
    <property type="entry name" value="SOLEUCYL-TRNA SYNTHETASE"/>
    <property type="match status" value="1"/>
</dbReference>
<dbReference type="Pfam" id="PF08264">
    <property type="entry name" value="Anticodon_1"/>
    <property type="match status" value="1"/>
</dbReference>
<dbReference type="Pfam" id="PF00133">
    <property type="entry name" value="tRNA-synt_1"/>
    <property type="match status" value="1"/>
</dbReference>
<dbReference type="Pfam" id="PF06827">
    <property type="entry name" value="zf-FPG_IleRS"/>
    <property type="match status" value="1"/>
</dbReference>
<dbReference type="PRINTS" id="PR00984">
    <property type="entry name" value="TRNASYNTHILE"/>
</dbReference>
<dbReference type="SUPFAM" id="SSF47323">
    <property type="entry name" value="Anticodon-binding domain of a subclass of class I aminoacyl-tRNA synthetases"/>
    <property type="match status" value="1"/>
</dbReference>
<dbReference type="SUPFAM" id="SSF52374">
    <property type="entry name" value="Nucleotidylyl transferase"/>
    <property type="match status" value="1"/>
</dbReference>
<dbReference type="SUPFAM" id="SSF50677">
    <property type="entry name" value="ValRS/IleRS/LeuRS editing domain"/>
    <property type="match status" value="1"/>
</dbReference>
<dbReference type="PROSITE" id="PS00178">
    <property type="entry name" value="AA_TRNA_LIGASE_I"/>
    <property type="match status" value="1"/>
</dbReference>
<gene>
    <name evidence="1" type="primary">ileS</name>
    <name type="ordered locus">Avin_11780</name>
</gene>
<sequence>MTDYKATLNLPETAFPMKAGLPQREPETLRHWNSIGLYRKLRQIGEGRQKFILHDGPPYANGNIHIGHAVNKILKDMIVRSKTLAGFDAPYVPGWDCHGLPIEHKVETTFGKNQPADLTRERCRAYAAEQVEGQKADFIRLGVLGDWENPYKTMDFANEAGEIRALAKMVEGGFVFKGLKPVNWCFDCGSALAEAEVEYQDKKSDAIDVFFPVGDADKLAAAFGLAQLDKPAGIVIWTTTPWTIPANQALNVHPDFIYALVDCGDRLLLLAEELVEGCLARYGLRGQVLATAKGEALELIRFRHPFYERFSPVYLADYVGLDAGTGIVHSAPAYGEDDFRSCKRYGMSNDEILSPVQSNGVYVESLPFFGGQFIWKANPNIVAKLAEVGCLLKHETISHSYMHCWRHKTPLIYRATAQWFVGMDSKAKDGTTLRERALAAIEQTRFVPAWGQARLHGMIAGRPDWCISRQRNWGVPIPFFLHKESGELHPRTVELMEEVARRVEQKGIEAWFRLDPAELLGAEADQYDKIADTLDVWFDSGTTHWHVMRGSHPMGHDQGPRADLYLEGSDQHRGWFHSSLLTGAAIDGHAPYRGLLTHGFTVDENGRKMSKSLGNVIAPQEITDSMGADILRLWVSATDYSGEMAVSKQILQRSADAYRRIRNTARFLLANLSGFDPAKDLLAAEDMLALDRWAVDRALLLQREVEEAFDSYRFWVVYQKVHNFCVQELGGFYLDIIKDRQYTCAADSVARRSCQSAMYHIGEALVRWIAPILAFTAEEIWQYLPGERNESVMLNTWYQGFAELPDGFALDRAFWEQVMAVKAAVNKELENRRNAKAIGGNLQAEVVLFAEPALAGRLALLGDELRFVLITSAAQVQPLGAAPADAVDTEVAGLRIQVSKSVHTKCARCWHHREDVGLDPAHPEICGRCVENIQGEGEVRQYA</sequence>
<organism>
    <name type="scientific">Azotobacter vinelandii (strain DJ / ATCC BAA-1303)</name>
    <dbReference type="NCBI Taxonomy" id="322710"/>
    <lineage>
        <taxon>Bacteria</taxon>
        <taxon>Pseudomonadati</taxon>
        <taxon>Pseudomonadota</taxon>
        <taxon>Gammaproteobacteria</taxon>
        <taxon>Pseudomonadales</taxon>
        <taxon>Pseudomonadaceae</taxon>
        <taxon>Azotobacter</taxon>
    </lineage>
</organism>
<keyword id="KW-0030">Aminoacyl-tRNA synthetase</keyword>
<keyword id="KW-0067">ATP-binding</keyword>
<keyword id="KW-0963">Cytoplasm</keyword>
<keyword id="KW-0436">Ligase</keyword>
<keyword id="KW-0479">Metal-binding</keyword>
<keyword id="KW-0547">Nucleotide-binding</keyword>
<keyword id="KW-0648">Protein biosynthesis</keyword>
<keyword id="KW-0862">Zinc</keyword>
<feature type="chain" id="PRO_1000216232" description="Isoleucine--tRNA ligase">
    <location>
        <begin position="1"/>
        <end position="943"/>
    </location>
</feature>
<feature type="short sequence motif" description="'HIGH' region">
    <location>
        <begin position="58"/>
        <end position="68"/>
    </location>
</feature>
<feature type="short sequence motif" description="'KMSKS' region">
    <location>
        <begin position="608"/>
        <end position="612"/>
    </location>
</feature>
<feature type="binding site" evidence="1">
    <location>
        <position position="567"/>
    </location>
    <ligand>
        <name>L-isoleucyl-5'-AMP</name>
        <dbReference type="ChEBI" id="CHEBI:178002"/>
    </ligand>
</feature>
<feature type="binding site" evidence="1">
    <location>
        <position position="611"/>
    </location>
    <ligand>
        <name>ATP</name>
        <dbReference type="ChEBI" id="CHEBI:30616"/>
    </ligand>
</feature>
<feature type="binding site" evidence="1">
    <location>
        <position position="906"/>
    </location>
    <ligand>
        <name>Zn(2+)</name>
        <dbReference type="ChEBI" id="CHEBI:29105"/>
    </ligand>
</feature>
<feature type="binding site" evidence="1">
    <location>
        <position position="909"/>
    </location>
    <ligand>
        <name>Zn(2+)</name>
        <dbReference type="ChEBI" id="CHEBI:29105"/>
    </ligand>
</feature>
<feature type="binding site" evidence="1">
    <location>
        <position position="926"/>
    </location>
    <ligand>
        <name>Zn(2+)</name>
        <dbReference type="ChEBI" id="CHEBI:29105"/>
    </ligand>
</feature>
<feature type="binding site" evidence="1">
    <location>
        <position position="929"/>
    </location>
    <ligand>
        <name>Zn(2+)</name>
        <dbReference type="ChEBI" id="CHEBI:29105"/>
    </ligand>
</feature>
<protein>
    <recommendedName>
        <fullName evidence="1">Isoleucine--tRNA ligase</fullName>
        <ecNumber evidence="1">6.1.1.5</ecNumber>
    </recommendedName>
    <alternativeName>
        <fullName evidence="1">Isoleucyl-tRNA synthetase</fullName>
        <shortName evidence="1">IleRS</shortName>
    </alternativeName>
</protein>
<comment type="function">
    <text evidence="1">Catalyzes the attachment of isoleucine to tRNA(Ile). As IleRS can inadvertently accommodate and process structurally similar amino acids such as valine, to avoid such errors it has two additional distinct tRNA(Ile)-dependent editing activities. One activity is designated as 'pretransfer' editing and involves the hydrolysis of activated Val-AMP. The other activity is designated 'posttransfer' editing and involves deacylation of mischarged Val-tRNA(Ile).</text>
</comment>
<comment type="catalytic activity">
    <reaction evidence="1">
        <text>tRNA(Ile) + L-isoleucine + ATP = L-isoleucyl-tRNA(Ile) + AMP + diphosphate</text>
        <dbReference type="Rhea" id="RHEA:11060"/>
        <dbReference type="Rhea" id="RHEA-COMP:9666"/>
        <dbReference type="Rhea" id="RHEA-COMP:9695"/>
        <dbReference type="ChEBI" id="CHEBI:30616"/>
        <dbReference type="ChEBI" id="CHEBI:33019"/>
        <dbReference type="ChEBI" id="CHEBI:58045"/>
        <dbReference type="ChEBI" id="CHEBI:78442"/>
        <dbReference type="ChEBI" id="CHEBI:78528"/>
        <dbReference type="ChEBI" id="CHEBI:456215"/>
        <dbReference type="EC" id="6.1.1.5"/>
    </reaction>
</comment>
<comment type="cofactor">
    <cofactor evidence="1">
        <name>Zn(2+)</name>
        <dbReference type="ChEBI" id="CHEBI:29105"/>
    </cofactor>
    <text evidence="1">Binds 1 zinc ion per subunit.</text>
</comment>
<comment type="subunit">
    <text evidence="1">Monomer.</text>
</comment>
<comment type="subcellular location">
    <subcellularLocation>
        <location evidence="1">Cytoplasm</location>
    </subcellularLocation>
</comment>
<comment type="domain">
    <text evidence="1">IleRS has two distinct active sites: one for aminoacylation and one for editing. The misactivated valine is translocated from the active site to the editing site, which sterically excludes the correctly activated isoleucine. The single editing site contains two valyl binding pockets, one specific for each substrate (Val-AMP or Val-tRNA(Ile)).</text>
</comment>
<comment type="similarity">
    <text evidence="1">Belongs to the class-I aminoacyl-tRNA synthetase family. IleS type 1 subfamily.</text>
</comment>
<proteinExistence type="inferred from homology"/>
<name>SYI_AZOVD</name>
<accession>C1DPH5</accession>
<evidence type="ECO:0000255" key="1">
    <source>
        <dbReference type="HAMAP-Rule" id="MF_02002"/>
    </source>
</evidence>
<reference key="1">
    <citation type="journal article" date="2009" name="J. Bacteriol.">
        <title>Genome sequence of Azotobacter vinelandii, an obligate aerobe specialized to support diverse anaerobic metabolic processes.</title>
        <authorList>
            <person name="Setubal J.C."/>
            <person name="Dos Santos P."/>
            <person name="Goldman B.S."/>
            <person name="Ertesvaag H."/>
            <person name="Espin G."/>
            <person name="Rubio L.M."/>
            <person name="Valla S."/>
            <person name="Almeida N.F."/>
            <person name="Balasubramanian D."/>
            <person name="Cromes L."/>
            <person name="Curatti L."/>
            <person name="Du Z."/>
            <person name="Godsy E."/>
            <person name="Goodner B."/>
            <person name="Hellner-Burris K."/>
            <person name="Hernandez J.A."/>
            <person name="Houmiel K."/>
            <person name="Imperial J."/>
            <person name="Kennedy C."/>
            <person name="Larson T.J."/>
            <person name="Latreille P."/>
            <person name="Ligon L.S."/>
            <person name="Lu J."/>
            <person name="Maerk M."/>
            <person name="Miller N.M."/>
            <person name="Norton S."/>
            <person name="O'Carroll I.P."/>
            <person name="Paulsen I."/>
            <person name="Raulfs E.C."/>
            <person name="Roemer R."/>
            <person name="Rosser J."/>
            <person name="Segura D."/>
            <person name="Slater S."/>
            <person name="Stricklin S.L."/>
            <person name="Studholme D.J."/>
            <person name="Sun J."/>
            <person name="Viana C.J."/>
            <person name="Wallin E."/>
            <person name="Wang B."/>
            <person name="Wheeler C."/>
            <person name="Zhu H."/>
            <person name="Dean D.R."/>
            <person name="Dixon R."/>
            <person name="Wood D."/>
        </authorList>
    </citation>
    <scope>NUCLEOTIDE SEQUENCE [LARGE SCALE GENOMIC DNA]</scope>
    <source>
        <strain>DJ / ATCC BAA-1303</strain>
    </source>
</reference>